<proteinExistence type="inferred from homology"/>
<accession>C0S3S0</accession>
<protein>
    <recommendedName>
        <fullName>Signal peptidase complex catalytic subunit SEC11</fullName>
        <ecNumber evidence="1">3.4.21.89</ecNumber>
    </recommendedName>
    <alternativeName>
        <fullName>Signal peptidase I</fullName>
    </alternativeName>
</protein>
<feature type="chain" id="PRO_0000412346" description="Signal peptidase complex catalytic subunit SEC11">
    <location>
        <begin position="1"/>
        <end position="197"/>
    </location>
</feature>
<feature type="topological domain" description="Cytoplasmic" evidence="3">
    <location>
        <begin position="1"/>
        <end position="15"/>
    </location>
</feature>
<feature type="transmembrane region" description="Helical; Signal-anchor for type II membrane protein" evidence="3">
    <location>
        <begin position="16"/>
        <end position="32"/>
    </location>
</feature>
<feature type="topological domain" description="Lumenal" evidence="3">
    <location>
        <begin position="33"/>
        <end position="197"/>
    </location>
</feature>
<feature type="region of interest" description="Disordered" evidence="4">
    <location>
        <begin position="102"/>
        <end position="134"/>
    </location>
</feature>
<feature type="region of interest" description="C-terminal short (CTS) helix" evidence="2">
    <location>
        <begin position="183"/>
        <end position="194"/>
    </location>
</feature>
<feature type="compositionally biased region" description="Basic and acidic residues" evidence="4">
    <location>
        <begin position="102"/>
        <end position="115"/>
    </location>
</feature>
<feature type="active site" description="Charge relay system" evidence="1">
    <location>
        <position position="53"/>
    </location>
</feature>
<feature type="active site" description="Charge relay system" evidence="1">
    <location>
        <position position="92"/>
    </location>
</feature>
<feature type="active site" description="Charge relay system" evidence="1">
    <location>
        <position position="139"/>
    </location>
</feature>
<feature type="glycosylation site" description="N-linked (GlcNAc...) asparagine" evidence="3">
    <location>
        <position position="41"/>
    </location>
</feature>
<sequence length="197" mass="21987">MLSSLAPYMANPRQTLTQVLNFALVLSTAFMLWKGLSVITNSTSPIVVVLSGSMEPAFQRGDLLFLWNRSPRVDVGEIVVYNVRGKDIPIVHRVMRSFPELPGREDKKNVKKGGEEGEETSSTPSQKLLTKGDNNMADDTELYAQGQEYLDRKEDIVGSVRGYVPTVGYVTILLSEHPWLRSVLLGFMGLMVVLQRE</sequence>
<comment type="function">
    <text evidence="1 2">Catalytic component of the signal peptidase complex (SPC) which catalyzes the cleavage of N-terminal signal sequences from nascent proteins as they are translocated into the lumen of the endoplasmic reticulum (By similarity). Specifically cleaves N-terminal signal peptides that contain a hydrophobic alpha-helix (h-region) shorter than 18-20 amino acids (By similarity).</text>
</comment>
<comment type="catalytic activity">
    <reaction evidence="1">
        <text>Cleavage of hydrophobic, N-terminal signal or leader sequences from secreted and periplasmic proteins.</text>
        <dbReference type="EC" id="3.4.21.89"/>
    </reaction>
</comment>
<comment type="subunit">
    <text evidence="1 2">Component of the signal peptidase complex (SPC) composed of a catalytic subunit SEC11 and three accessory subunits SPC1, SPC2 and SPC3 (By similarity). The complex induces a local thinning of the ER membrane which is used to measure the length of the signal peptide (SP) h-region of protein substrates. This ensures the selectivity of the complex towards h-regions shorter than 18-20 amino acids (By similarity). SPC associates with the translocon complex (By similarity).</text>
</comment>
<comment type="subcellular location">
    <subcellularLocation>
        <location evidence="1">Endoplasmic reticulum membrane</location>
        <topology evidence="1">Single-pass type II membrane protein</topology>
    </subcellularLocation>
</comment>
<comment type="domain">
    <text evidence="2">The C-terminal short (CTS) helix is essential for catalytic activity. It may be accommodated as a transmembrane helix in the thinned membrane environment of the complex, similarly to the signal peptide in the complex substrates.</text>
</comment>
<comment type="similarity">
    <text evidence="5">Belongs to the peptidase S26B family.</text>
</comment>
<keyword id="KW-0256">Endoplasmic reticulum</keyword>
<keyword id="KW-0325">Glycoprotein</keyword>
<keyword id="KW-0378">Hydrolase</keyword>
<keyword id="KW-0472">Membrane</keyword>
<keyword id="KW-0645">Protease</keyword>
<keyword id="KW-0735">Signal-anchor</keyword>
<keyword id="KW-0812">Transmembrane</keyword>
<keyword id="KW-1133">Transmembrane helix</keyword>
<dbReference type="EC" id="3.4.21.89" evidence="1"/>
<dbReference type="EMBL" id="KN305533">
    <property type="protein sequence ID" value="EEH20075.2"/>
    <property type="molecule type" value="Genomic_DNA"/>
</dbReference>
<dbReference type="SMR" id="C0S3S0"/>
<dbReference type="GlyCosmos" id="C0S3S0">
    <property type="glycosylation" value="1 site, No reported glycans"/>
</dbReference>
<dbReference type="VEuPathDB" id="FungiDB:PABG_02334"/>
<dbReference type="HOGENOM" id="CLU_089996_0_0_1"/>
<dbReference type="OrthoDB" id="30755at33183"/>
<dbReference type="GO" id="GO:0005787">
    <property type="term" value="C:signal peptidase complex"/>
    <property type="evidence" value="ECO:0007669"/>
    <property type="project" value="TreeGrafter"/>
</dbReference>
<dbReference type="GO" id="GO:0004252">
    <property type="term" value="F:serine-type endopeptidase activity"/>
    <property type="evidence" value="ECO:0007669"/>
    <property type="project" value="UniProtKB-EC"/>
</dbReference>
<dbReference type="GO" id="GO:0006465">
    <property type="term" value="P:signal peptide processing"/>
    <property type="evidence" value="ECO:0007669"/>
    <property type="project" value="InterPro"/>
</dbReference>
<dbReference type="CDD" id="cd06530">
    <property type="entry name" value="S26_SPase_I"/>
    <property type="match status" value="1"/>
</dbReference>
<dbReference type="InterPro" id="IPR036286">
    <property type="entry name" value="LexA/Signal_pep-like_sf"/>
</dbReference>
<dbReference type="InterPro" id="IPR019756">
    <property type="entry name" value="Pept_S26A_signal_pept_1_Ser-AS"/>
</dbReference>
<dbReference type="InterPro" id="IPR019533">
    <property type="entry name" value="Peptidase_S26"/>
</dbReference>
<dbReference type="InterPro" id="IPR001733">
    <property type="entry name" value="Peptidase_S26B"/>
</dbReference>
<dbReference type="NCBIfam" id="TIGR02228">
    <property type="entry name" value="sigpep_I_arch"/>
    <property type="match status" value="1"/>
</dbReference>
<dbReference type="PANTHER" id="PTHR10806">
    <property type="entry name" value="SIGNAL PEPTIDASE COMPLEX CATALYTIC SUBUNIT SEC11"/>
    <property type="match status" value="1"/>
</dbReference>
<dbReference type="PANTHER" id="PTHR10806:SF6">
    <property type="entry name" value="SIGNAL PEPTIDASE COMPLEX CATALYTIC SUBUNIT SEC11"/>
    <property type="match status" value="1"/>
</dbReference>
<dbReference type="PRINTS" id="PR00728">
    <property type="entry name" value="SIGNALPTASE"/>
</dbReference>
<dbReference type="SUPFAM" id="SSF51306">
    <property type="entry name" value="LexA/Signal peptidase"/>
    <property type="match status" value="1"/>
</dbReference>
<dbReference type="PROSITE" id="PS00501">
    <property type="entry name" value="SPASE_I_1"/>
    <property type="match status" value="1"/>
</dbReference>
<evidence type="ECO:0000250" key="1">
    <source>
        <dbReference type="UniProtKB" id="P15367"/>
    </source>
</evidence>
<evidence type="ECO:0000250" key="2">
    <source>
        <dbReference type="UniProtKB" id="P67812"/>
    </source>
</evidence>
<evidence type="ECO:0000255" key="3"/>
<evidence type="ECO:0000256" key="4">
    <source>
        <dbReference type="SAM" id="MobiDB-lite"/>
    </source>
</evidence>
<evidence type="ECO:0000305" key="5"/>
<gene>
    <name type="primary">SEC11</name>
    <name type="ORF">PABG_02334</name>
</gene>
<name>SEC11_PARBP</name>
<organism>
    <name type="scientific">Paracoccidioides brasiliensis (strain Pb03)</name>
    <dbReference type="NCBI Taxonomy" id="482561"/>
    <lineage>
        <taxon>Eukaryota</taxon>
        <taxon>Fungi</taxon>
        <taxon>Dikarya</taxon>
        <taxon>Ascomycota</taxon>
        <taxon>Pezizomycotina</taxon>
        <taxon>Eurotiomycetes</taxon>
        <taxon>Eurotiomycetidae</taxon>
        <taxon>Onygenales</taxon>
        <taxon>Ajellomycetaceae</taxon>
        <taxon>Paracoccidioides</taxon>
    </lineage>
</organism>
<reference key="1">
    <citation type="journal article" date="2011" name="PLoS Genet.">
        <title>Comparative genomic analysis of human fungal pathogens causing paracoccidioidomycosis.</title>
        <authorList>
            <person name="Desjardins C.A."/>
            <person name="Champion M.D."/>
            <person name="Holder J.W."/>
            <person name="Muszewska A."/>
            <person name="Goldberg J."/>
            <person name="Bailao A.M."/>
            <person name="Brigido M.M."/>
            <person name="Ferreira M.E."/>
            <person name="Garcia A.M."/>
            <person name="Grynberg M."/>
            <person name="Gujja S."/>
            <person name="Heiman D.I."/>
            <person name="Henn M.R."/>
            <person name="Kodira C.D."/>
            <person name="Leon-Narvaez H."/>
            <person name="Longo L.V.G."/>
            <person name="Ma L.-J."/>
            <person name="Malavazi I."/>
            <person name="Matsuo A.L."/>
            <person name="Morais F.V."/>
            <person name="Pereira M."/>
            <person name="Rodriguez-Brito S."/>
            <person name="Sakthikumar S."/>
            <person name="Salem-Izacc S.M."/>
            <person name="Sykes S.M."/>
            <person name="Teixeira M.M."/>
            <person name="Vallejo M.C."/>
            <person name="Walter M.E."/>
            <person name="Yandava C."/>
            <person name="Young S."/>
            <person name="Zeng Q."/>
            <person name="Zucker J."/>
            <person name="Felipe M.S."/>
            <person name="Goldman G.H."/>
            <person name="Haas B.J."/>
            <person name="McEwen J.G."/>
            <person name="Nino-Vega G."/>
            <person name="Puccia R."/>
            <person name="San-Blas G."/>
            <person name="Soares C.M."/>
            <person name="Birren B.W."/>
            <person name="Cuomo C.A."/>
        </authorList>
    </citation>
    <scope>NUCLEOTIDE SEQUENCE [LARGE SCALE GENOMIC DNA]</scope>
    <source>
        <strain>Pb03</strain>
    </source>
</reference>